<proteinExistence type="inferred from homology"/>
<organism>
    <name type="scientific">Xanthobacter autotrophicus (strain ATCC BAA-1158 / Py2)</name>
    <dbReference type="NCBI Taxonomy" id="78245"/>
    <lineage>
        <taxon>Bacteria</taxon>
        <taxon>Pseudomonadati</taxon>
        <taxon>Pseudomonadota</taxon>
        <taxon>Alphaproteobacteria</taxon>
        <taxon>Hyphomicrobiales</taxon>
        <taxon>Xanthobacteraceae</taxon>
        <taxon>Xanthobacter</taxon>
    </lineage>
</organism>
<comment type="function">
    <text evidence="1">Specifically methylates the uridine in position 2552 of 23S rRNA at the 2'-O position of the ribose in the fully assembled 50S ribosomal subunit.</text>
</comment>
<comment type="catalytic activity">
    <reaction evidence="1">
        <text>uridine(2552) in 23S rRNA + S-adenosyl-L-methionine = 2'-O-methyluridine(2552) in 23S rRNA + S-adenosyl-L-homocysteine + H(+)</text>
        <dbReference type="Rhea" id="RHEA:42720"/>
        <dbReference type="Rhea" id="RHEA-COMP:10202"/>
        <dbReference type="Rhea" id="RHEA-COMP:10203"/>
        <dbReference type="ChEBI" id="CHEBI:15378"/>
        <dbReference type="ChEBI" id="CHEBI:57856"/>
        <dbReference type="ChEBI" id="CHEBI:59789"/>
        <dbReference type="ChEBI" id="CHEBI:65315"/>
        <dbReference type="ChEBI" id="CHEBI:74478"/>
        <dbReference type="EC" id="2.1.1.166"/>
    </reaction>
</comment>
<comment type="subcellular location">
    <subcellularLocation>
        <location evidence="1">Cytoplasm</location>
    </subcellularLocation>
</comment>
<comment type="similarity">
    <text evidence="1">Belongs to the class I-like SAM-binding methyltransferase superfamily. RNA methyltransferase RlmE family.</text>
</comment>
<keyword id="KW-0963">Cytoplasm</keyword>
<keyword id="KW-0489">Methyltransferase</keyword>
<keyword id="KW-1185">Reference proteome</keyword>
<keyword id="KW-0698">rRNA processing</keyword>
<keyword id="KW-0949">S-adenosyl-L-methionine</keyword>
<keyword id="KW-0808">Transferase</keyword>
<dbReference type="EC" id="2.1.1.166" evidence="1"/>
<dbReference type="EMBL" id="CP000781">
    <property type="protein sequence ID" value="ABS66088.1"/>
    <property type="molecule type" value="Genomic_DNA"/>
</dbReference>
<dbReference type="SMR" id="A7IDJ5"/>
<dbReference type="STRING" id="78245.Xaut_0837"/>
<dbReference type="KEGG" id="xau:Xaut_0837"/>
<dbReference type="eggNOG" id="COG0293">
    <property type="taxonomic scope" value="Bacteria"/>
</dbReference>
<dbReference type="HOGENOM" id="CLU_009422_4_0_5"/>
<dbReference type="OrthoDB" id="9790080at2"/>
<dbReference type="PhylomeDB" id="A7IDJ5"/>
<dbReference type="Proteomes" id="UP000002417">
    <property type="component" value="Chromosome"/>
</dbReference>
<dbReference type="GO" id="GO:0005737">
    <property type="term" value="C:cytoplasm"/>
    <property type="evidence" value="ECO:0007669"/>
    <property type="project" value="UniProtKB-SubCell"/>
</dbReference>
<dbReference type="GO" id="GO:0008650">
    <property type="term" value="F:rRNA (uridine-2'-O-)-methyltransferase activity"/>
    <property type="evidence" value="ECO:0007669"/>
    <property type="project" value="UniProtKB-UniRule"/>
</dbReference>
<dbReference type="Gene3D" id="3.40.50.150">
    <property type="entry name" value="Vaccinia Virus protein VP39"/>
    <property type="match status" value="1"/>
</dbReference>
<dbReference type="HAMAP" id="MF_01547">
    <property type="entry name" value="RNA_methyltr_E"/>
    <property type="match status" value="1"/>
</dbReference>
<dbReference type="InterPro" id="IPR050082">
    <property type="entry name" value="RNA_methyltr_RlmE"/>
</dbReference>
<dbReference type="InterPro" id="IPR002877">
    <property type="entry name" value="RNA_MeTrfase_FtsJ_dom"/>
</dbReference>
<dbReference type="InterPro" id="IPR015507">
    <property type="entry name" value="rRNA-MeTfrase_E"/>
</dbReference>
<dbReference type="InterPro" id="IPR029063">
    <property type="entry name" value="SAM-dependent_MTases_sf"/>
</dbReference>
<dbReference type="PANTHER" id="PTHR10920">
    <property type="entry name" value="RIBOSOMAL RNA METHYLTRANSFERASE"/>
    <property type="match status" value="1"/>
</dbReference>
<dbReference type="PANTHER" id="PTHR10920:SF18">
    <property type="entry name" value="RRNA METHYLTRANSFERASE 2, MITOCHONDRIAL"/>
    <property type="match status" value="1"/>
</dbReference>
<dbReference type="Pfam" id="PF01728">
    <property type="entry name" value="FtsJ"/>
    <property type="match status" value="1"/>
</dbReference>
<dbReference type="PIRSF" id="PIRSF005461">
    <property type="entry name" value="23S_rRNA_mtase"/>
    <property type="match status" value="1"/>
</dbReference>
<dbReference type="SUPFAM" id="SSF53335">
    <property type="entry name" value="S-adenosyl-L-methionine-dependent methyltransferases"/>
    <property type="match status" value="1"/>
</dbReference>
<name>RLME_XANP2</name>
<feature type="chain" id="PRO_1000195027" description="Ribosomal RNA large subunit methyltransferase E">
    <location>
        <begin position="1"/>
        <end position="254"/>
    </location>
</feature>
<feature type="region of interest" description="Disordered" evidence="2">
    <location>
        <begin position="1"/>
        <end position="28"/>
    </location>
</feature>
<feature type="region of interest" description="Disordered" evidence="2">
    <location>
        <begin position="231"/>
        <end position="254"/>
    </location>
</feature>
<feature type="compositionally biased region" description="Basic residues" evidence="2">
    <location>
        <begin position="13"/>
        <end position="22"/>
    </location>
</feature>
<feature type="active site" description="Proton acceptor" evidence="1">
    <location>
        <position position="183"/>
    </location>
</feature>
<feature type="binding site" evidence="1">
    <location>
        <position position="80"/>
    </location>
    <ligand>
        <name>S-adenosyl-L-methionine</name>
        <dbReference type="ChEBI" id="CHEBI:59789"/>
    </ligand>
</feature>
<feature type="binding site" evidence="1">
    <location>
        <position position="82"/>
    </location>
    <ligand>
        <name>S-adenosyl-L-methionine</name>
        <dbReference type="ChEBI" id="CHEBI:59789"/>
    </ligand>
</feature>
<feature type="binding site" evidence="1">
    <location>
        <position position="103"/>
    </location>
    <ligand>
        <name>S-adenosyl-L-methionine</name>
        <dbReference type="ChEBI" id="CHEBI:59789"/>
    </ligand>
</feature>
<feature type="binding site" evidence="1">
    <location>
        <position position="119"/>
    </location>
    <ligand>
        <name>S-adenosyl-L-methionine</name>
        <dbReference type="ChEBI" id="CHEBI:59789"/>
    </ligand>
</feature>
<feature type="binding site" evidence="1">
    <location>
        <position position="143"/>
    </location>
    <ligand>
        <name>S-adenosyl-L-methionine</name>
        <dbReference type="ChEBI" id="CHEBI:59789"/>
    </ligand>
</feature>
<reference key="1">
    <citation type="submission" date="2007-07" db="EMBL/GenBank/DDBJ databases">
        <title>Complete sequence of chromosome of Xanthobacter autotrophicus Py2.</title>
        <authorList>
            <consortium name="US DOE Joint Genome Institute"/>
            <person name="Copeland A."/>
            <person name="Lucas S."/>
            <person name="Lapidus A."/>
            <person name="Barry K."/>
            <person name="Glavina del Rio T."/>
            <person name="Hammon N."/>
            <person name="Israni S."/>
            <person name="Dalin E."/>
            <person name="Tice H."/>
            <person name="Pitluck S."/>
            <person name="Sims D."/>
            <person name="Brettin T."/>
            <person name="Bruce D."/>
            <person name="Detter J.C."/>
            <person name="Han C."/>
            <person name="Tapia R."/>
            <person name="Brainard J."/>
            <person name="Schmutz J."/>
            <person name="Larimer F."/>
            <person name="Land M."/>
            <person name="Hauser L."/>
            <person name="Kyrpides N."/>
            <person name="Kim E."/>
            <person name="Ensigns S.A."/>
            <person name="Richardson P."/>
        </authorList>
    </citation>
    <scope>NUCLEOTIDE SEQUENCE [LARGE SCALE GENOMIC DNA]</scope>
    <source>
        <strain>ATCC BAA-1158 / Py2</strain>
    </source>
</reference>
<accession>A7IDJ5</accession>
<gene>
    <name evidence="1" type="primary">rlmE</name>
    <name evidence="1" type="synonym">ftsJ</name>
    <name evidence="1" type="synonym">rrmJ</name>
    <name type="ordered locus">Xaut_0837</name>
</gene>
<sequence length="254" mass="27434">MTTPPRGPDGRPLKVRVKKSRGRTTSSQKWLQRQLNDPYVARAKREGWRSRAAFKLIEMDEKARLLKRGMRIVDLGAAPGGWSQVAAKKIGLEEGLGKIVAIDLLEIEPIPGVAFAQMDFLAPDAPERLIAMLGGQADLVMSDMAANATGHKKTDHLRIVGLVELAVEFARQVLAPGGTFLAKVIQGGMEATLLADLKRDFTQVRHVKPAASRADSAELYVLATGFRGEADRAETDDAGTDGTGTAEAQAPRDQ</sequence>
<protein>
    <recommendedName>
        <fullName evidence="1">Ribosomal RNA large subunit methyltransferase E</fullName>
        <ecNumber evidence="1">2.1.1.166</ecNumber>
    </recommendedName>
    <alternativeName>
        <fullName evidence="1">23S rRNA Um2552 methyltransferase</fullName>
    </alternativeName>
    <alternativeName>
        <fullName evidence="1">rRNA (uridine-2'-O-)-methyltransferase</fullName>
    </alternativeName>
</protein>
<evidence type="ECO:0000255" key="1">
    <source>
        <dbReference type="HAMAP-Rule" id="MF_01547"/>
    </source>
</evidence>
<evidence type="ECO:0000256" key="2">
    <source>
        <dbReference type="SAM" id="MobiDB-lite"/>
    </source>
</evidence>